<name>RHAM_YERPP</name>
<dbReference type="EC" id="5.1.3.32" evidence="1"/>
<dbReference type="EMBL" id="CP000668">
    <property type="protein sequence ID" value="ABP41996.1"/>
    <property type="molecule type" value="Genomic_DNA"/>
</dbReference>
<dbReference type="PIR" id="AH0040">
    <property type="entry name" value="AH0040"/>
</dbReference>
<dbReference type="RefSeq" id="WP_002209101.1">
    <property type="nucleotide sequence ID" value="NZ_CP009715.1"/>
</dbReference>
<dbReference type="SMR" id="A4TRT4"/>
<dbReference type="GeneID" id="57974279"/>
<dbReference type="KEGG" id="ypp:YPDSF_3646"/>
<dbReference type="PATRIC" id="fig|386656.14.peg.308"/>
<dbReference type="UniPathway" id="UPA00125"/>
<dbReference type="GO" id="GO:0005737">
    <property type="term" value="C:cytoplasm"/>
    <property type="evidence" value="ECO:0007669"/>
    <property type="project" value="UniProtKB-SubCell"/>
</dbReference>
<dbReference type="GO" id="GO:0062192">
    <property type="term" value="F:L-rhamnose mutarotase activity"/>
    <property type="evidence" value="ECO:0007669"/>
    <property type="project" value="UniProtKB-EC"/>
</dbReference>
<dbReference type="GO" id="GO:0019301">
    <property type="term" value="P:rhamnose catabolic process"/>
    <property type="evidence" value="ECO:0007669"/>
    <property type="project" value="TreeGrafter"/>
</dbReference>
<dbReference type="Gene3D" id="3.30.70.100">
    <property type="match status" value="1"/>
</dbReference>
<dbReference type="HAMAP" id="MF_01663">
    <property type="entry name" value="L_rham_rotase"/>
    <property type="match status" value="1"/>
</dbReference>
<dbReference type="InterPro" id="IPR011008">
    <property type="entry name" value="Dimeric_a/b-barrel"/>
</dbReference>
<dbReference type="InterPro" id="IPR013448">
    <property type="entry name" value="L-rhamnose_mutarotase"/>
</dbReference>
<dbReference type="InterPro" id="IPR008000">
    <property type="entry name" value="Rham/fucose_mutarotase"/>
</dbReference>
<dbReference type="NCBIfam" id="TIGR02625">
    <property type="entry name" value="YiiL_rotase"/>
    <property type="match status" value="1"/>
</dbReference>
<dbReference type="PANTHER" id="PTHR34389">
    <property type="entry name" value="L-RHAMNOSE MUTAROTASE"/>
    <property type="match status" value="1"/>
</dbReference>
<dbReference type="PANTHER" id="PTHR34389:SF2">
    <property type="entry name" value="L-RHAMNOSE MUTAROTASE"/>
    <property type="match status" value="1"/>
</dbReference>
<dbReference type="Pfam" id="PF05336">
    <property type="entry name" value="rhaM"/>
    <property type="match status" value="1"/>
</dbReference>
<dbReference type="SUPFAM" id="SSF54909">
    <property type="entry name" value="Dimeric alpha+beta barrel"/>
    <property type="match status" value="1"/>
</dbReference>
<proteinExistence type="inferred from homology"/>
<feature type="chain" id="PRO_0000344612" description="L-rhamnose mutarotase">
    <location>
        <begin position="1"/>
        <end position="104"/>
    </location>
</feature>
<feature type="active site" description="Proton donor" evidence="1">
    <location>
        <position position="22"/>
    </location>
</feature>
<feature type="binding site" evidence="1">
    <location>
        <position position="18"/>
    </location>
    <ligand>
        <name>substrate</name>
    </ligand>
</feature>
<feature type="binding site" evidence="1">
    <location>
        <position position="41"/>
    </location>
    <ligand>
        <name>substrate</name>
    </ligand>
</feature>
<feature type="binding site" evidence="1">
    <location>
        <begin position="76"/>
        <end position="77"/>
    </location>
    <ligand>
        <name>substrate</name>
    </ligand>
</feature>
<accession>A4TRT4</accession>
<gene>
    <name evidence="1" type="primary">rhaM</name>
    <name type="ordered locus">YPDSF_3646</name>
</gene>
<comment type="function">
    <text evidence="1">Involved in the anomeric conversion of L-rhamnose.</text>
</comment>
<comment type="catalytic activity">
    <reaction evidence="1">
        <text>alpha-L-rhamnose = beta-L-rhamnose</text>
        <dbReference type="Rhea" id="RHEA:25584"/>
        <dbReference type="ChEBI" id="CHEBI:27586"/>
        <dbReference type="ChEBI" id="CHEBI:27907"/>
        <dbReference type="EC" id="5.1.3.32"/>
    </reaction>
</comment>
<comment type="pathway">
    <text evidence="1">Carbohydrate metabolism; L-rhamnose metabolism.</text>
</comment>
<comment type="subunit">
    <text evidence="1">Homodimer.</text>
</comment>
<comment type="subcellular location">
    <subcellularLocation>
        <location evidence="1">Cytoplasm</location>
    </subcellularLocation>
</comment>
<comment type="similarity">
    <text evidence="1">Belongs to the rhamnose mutarotase family.</text>
</comment>
<organism>
    <name type="scientific">Yersinia pestis (strain Pestoides F)</name>
    <dbReference type="NCBI Taxonomy" id="386656"/>
    <lineage>
        <taxon>Bacteria</taxon>
        <taxon>Pseudomonadati</taxon>
        <taxon>Pseudomonadota</taxon>
        <taxon>Gammaproteobacteria</taxon>
        <taxon>Enterobacterales</taxon>
        <taxon>Yersiniaceae</taxon>
        <taxon>Yersinia</taxon>
    </lineage>
</organism>
<sequence>MIRKAFVMAVNPDAHAEYQRRHTPIWPELESVLKAHGAHHYSIFLDETRNLLFGVVEIESEERWNAVAQTAECQRWWQHMADVMPSHPDNSPVSQALREVFYLE</sequence>
<reference key="1">
    <citation type="submission" date="2007-02" db="EMBL/GenBank/DDBJ databases">
        <title>Complete sequence of chromosome of Yersinia pestis Pestoides F.</title>
        <authorList>
            <consortium name="US DOE Joint Genome Institute"/>
            <person name="Copeland A."/>
            <person name="Lucas S."/>
            <person name="Lapidus A."/>
            <person name="Barry K."/>
            <person name="Detter J.C."/>
            <person name="Glavina del Rio T."/>
            <person name="Hammon N."/>
            <person name="Israni S."/>
            <person name="Dalin E."/>
            <person name="Tice H."/>
            <person name="Pitluck S."/>
            <person name="Di Bartolo G."/>
            <person name="Chain P."/>
            <person name="Malfatti S."/>
            <person name="Shin M."/>
            <person name="Vergez L."/>
            <person name="Schmutz J."/>
            <person name="Larimer F."/>
            <person name="Land M."/>
            <person name="Hauser L."/>
            <person name="Worsham P."/>
            <person name="Chu M."/>
            <person name="Bearden S."/>
            <person name="Garcia E."/>
            <person name="Richardson P."/>
        </authorList>
    </citation>
    <scope>NUCLEOTIDE SEQUENCE [LARGE SCALE GENOMIC DNA]</scope>
    <source>
        <strain>Pestoides F</strain>
    </source>
</reference>
<keyword id="KW-0119">Carbohydrate metabolism</keyword>
<keyword id="KW-0963">Cytoplasm</keyword>
<keyword id="KW-0413">Isomerase</keyword>
<keyword id="KW-0684">Rhamnose metabolism</keyword>
<evidence type="ECO:0000255" key="1">
    <source>
        <dbReference type="HAMAP-Rule" id="MF_01663"/>
    </source>
</evidence>
<protein>
    <recommendedName>
        <fullName evidence="1">L-rhamnose mutarotase</fullName>
        <ecNumber evidence="1">5.1.3.32</ecNumber>
    </recommendedName>
    <alternativeName>
        <fullName evidence="1">Rhamnose 1-epimerase</fullName>
    </alternativeName>
    <alternativeName>
        <fullName evidence="1">Type-3 mutarotase</fullName>
    </alternativeName>
</protein>